<protein>
    <recommendedName>
        <fullName>Glucose-1-phosphate thymidylyltransferase</fullName>
        <ecNumber evidence="1">2.7.7.24</ecNumber>
    </recommendedName>
    <alternativeName>
        <fullName>dTDP-glucose pyrophosphorylase</fullName>
    </alternativeName>
    <alternativeName>
        <fullName>dTDP-glucose synthase</fullName>
    </alternativeName>
</protein>
<feature type="chain" id="PRO_0000208002" description="Glucose-1-phosphate thymidylyltransferase">
    <location>
        <begin position="1"/>
        <end position="289"/>
    </location>
</feature>
<feature type="binding site" evidence="1">
    <location>
        <position position="108"/>
    </location>
    <ligand>
        <name>Mg(2+)</name>
        <dbReference type="ChEBI" id="CHEBI:18420"/>
    </ligand>
</feature>
<feature type="binding site" evidence="1">
    <location>
        <position position="223"/>
    </location>
    <ligand>
        <name>Mg(2+)</name>
        <dbReference type="ChEBI" id="CHEBI:18420"/>
    </ligand>
</feature>
<name>RMLA_YEREN</name>
<reference key="1">
    <citation type="journal article" date="1993" name="Mol. Microbiol.">
        <title>Genetic organization and sequence of the rfb gene cluster of Yersinia enterocolitica serotype O:3: similarities to the dTDP-L-rhamnose biosynthesis pathway of Salmonella and to the bacterial polysaccharide transport systems.</title>
        <authorList>
            <person name="Zhang L."/>
            <person name="Al-Hendy A."/>
            <person name="Toivanen P."/>
            <person name="Skurnik M."/>
        </authorList>
    </citation>
    <scope>NUCLEOTIDE SEQUENCE [GENOMIC DNA]</scope>
    <source>
        <strain>6471/76 / Serotype O:3</strain>
    </source>
</reference>
<proteinExistence type="inferred from homology"/>
<keyword id="KW-0448">Lipopolysaccharide biosynthesis</keyword>
<keyword id="KW-0460">Magnesium</keyword>
<keyword id="KW-0479">Metal-binding</keyword>
<keyword id="KW-0548">Nucleotidyltransferase</keyword>
<keyword id="KW-0808">Transferase</keyword>
<evidence type="ECO:0000250" key="1">
    <source>
        <dbReference type="UniProtKB" id="P61887"/>
    </source>
</evidence>
<evidence type="ECO:0000305" key="2"/>
<comment type="function">
    <text evidence="1">Catalyzes the formation of dTDP-glucose, from dTTP and glucose 1-phosphate, as well as its pyrophosphorolysis.</text>
</comment>
<comment type="catalytic activity">
    <reaction evidence="1">
        <text>dTTP + alpha-D-glucose 1-phosphate + H(+) = dTDP-alpha-D-glucose + diphosphate</text>
        <dbReference type="Rhea" id="RHEA:15225"/>
        <dbReference type="ChEBI" id="CHEBI:15378"/>
        <dbReference type="ChEBI" id="CHEBI:33019"/>
        <dbReference type="ChEBI" id="CHEBI:37568"/>
        <dbReference type="ChEBI" id="CHEBI:57477"/>
        <dbReference type="ChEBI" id="CHEBI:58601"/>
        <dbReference type="EC" id="2.7.7.24"/>
    </reaction>
</comment>
<comment type="cofactor">
    <cofactor evidence="1">
        <name>Mg(2+)</name>
        <dbReference type="ChEBI" id="CHEBI:18420"/>
    </cofactor>
    <text evidence="1">Binds 1 Mg(2+) ion per subunit.</text>
</comment>
<comment type="pathway">
    <text>Nucleotide-sugar biosynthesis; dTDP-6-deoxy-L-altrose biosynthesis.</text>
</comment>
<comment type="pathway">
    <text>Bacterial outer membrane biogenesis; LPS O-antigen biosynthesis.</text>
</comment>
<comment type="subunit">
    <text evidence="1">Homotetramer.</text>
</comment>
<comment type="similarity">
    <text evidence="2">Belongs to the glucose-1-phosphate thymidylyltransferase family.</text>
</comment>
<accession>P55257</accession>
<sequence length="289" mass="32402">MKGIVLAGGAGTRLHPITRGVSKQLLPVYDKPMIYYPISVLMLAGIQDILIISTPEDLPSFKRLLGDGSQFGIRLQYAKQPSPDGLAQAFIIGEEFIAGERCALVLGDNIYFGQSFGKQLREVASRNDGATVFGYQVVDAERFGVIEFDENFNALSIEEKPQKPKSDWAVTGLYFYDKDVVEMAKEIKPSERGELEITTLNEMYLAKGKLRVELLGRGFAWLDTGTHDSLIDASLFIHTIEKRQGFKVACLEEIAYQNQWLSREKLNELAEALNKTYYGQYLLKLAKES</sequence>
<organism>
    <name type="scientific">Yersinia enterocolitica</name>
    <dbReference type="NCBI Taxonomy" id="630"/>
    <lineage>
        <taxon>Bacteria</taxon>
        <taxon>Pseudomonadati</taxon>
        <taxon>Pseudomonadota</taxon>
        <taxon>Gammaproteobacteria</taxon>
        <taxon>Enterobacterales</taxon>
        <taxon>Yersiniaceae</taxon>
        <taxon>Yersinia</taxon>
    </lineage>
</organism>
<dbReference type="EC" id="2.7.7.24" evidence="1"/>
<dbReference type="EMBL" id="Z18920">
    <property type="protein sequence ID" value="CAA79347.1"/>
    <property type="molecule type" value="Genomic_DNA"/>
</dbReference>
<dbReference type="PIR" id="S35294">
    <property type="entry name" value="S35294"/>
</dbReference>
<dbReference type="RefSeq" id="WP_005157835.1">
    <property type="nucleotide sequence ID" value="NZ_WJHZ01000037.1"/>
</dbReference>
<dbReference type="SMR" id="P55257"/>
<dbReference type="STRING" id="1443113.LC20_05068"/>
<dbReference type="GeneID" id="31409724"/>
<dbReference type="UniPathway" id="UPA00281"/>
<dbReference type="UniPathway" id="UPA00816"/>
<dbReference type="GO" id="GO:0008879">
    <property type="term" value="F:glucose-1-phosphate thymidylyltransferase activity"/>
    <property type="evidence" value="ECO:0007669"/>
    <property type="project" value="UniProtKB-EC"/>
</dbReference>
<dbReference type="GO" id="GO:0046872">
    <property type="term" value="F:metal ion binding"/>
    <property type="evidence" value="ECO:0007669"/>
    <property type="project" value="UniProtKB-KW"/>
</dbReference>
<dbReference type="GO" id="GO:0009243">
    <property type="term" value="P:O antigen biosynthetic process"/>
    <property type="evidence" value="ECO:0007669"/>
    <property type="project" value="UniProtKB-UniPathway"/>
</dbReference>
<dbReference type="CDD" id="cd02538">
    <property type="entry name" value="G1P_TT_short"/>
    <property type="match status" value="1"/>
</dbReference>
<dbReference type="FunFam" id="3.90.550.10:FF:000023">
    <property type="entry name" value="Glucose-1-phosphate thymidylyltransferase"/>
    <property type="match status" value="1"/>
</dbReference>
<dbReference type="Gene3D" id="3.90.550.10">
    <property type="entry name" value="Spore Coat Polysaccharide Biosynthesis Protein SpsA, Chain A"/>
    <property type="match status" value="1"/>
</dbReference>
<dbReference type="InterPro" id="IPR005907">
    <property type="entry name" value="G1P_thy_trans_s"/>
</dbReference>
<dbReference type="InterPro" id="IPR005835">
    <property type="entry name" value="NTP_transferase_dom"/>
</dbReference>
<dbReference type="InterPro" id="IPR029044">
    <property type="entry name" value="Nucleotide-diphossugar_trans"/>
</dbReference>
<dbReference type="NCBIfam" id="TIGR01207">
    <property type="entry name" value="rmlA"/>
    <property type="match status" value="1"/>
</dbReference>
<dbReference type="PANTHER" id="PTHR43532">
    <property type="entry name" value="GLUCOSE-1-PHOSPHATE THYMIDYLYLTRANSFERASE"/>
    <property type="match status" value="1"/>
</dbReference>
<dbReference type="PANTHER" id="PTHR43532:SF4">
    <property type="entry name" value="GLUCOSE-1-PHOSPHATE THYMIDYLYLTRANSFERASE 2"/>
    <property type="match status" value="1"/>
</dbReference>
<dbReference type="Pfam" id="PF00483">
    <property type="entry name" value="NTP_transferase"/>
    <property type="match status" value="1"/>
</dbReference>
<dbReference type="SUPFAM" id="SSF53448">
    <property type="entry name" value="Nucleotide-diphospho-sugar transferases"/>
    <property type="match status" value="1"/>
</dbReference>
<gene>
    <name type="primary">rmlA</name>
    <name type="synonym">rfbA</name>
</gene>